<accession>Q6BGU8</accession>
<evidence type="ECO:0000250" key="1"/>
<evidence type="ECO:0000255" key="2">
    <source>
        <dbReference type="PROSITE-ProRule" id="PRU00541"/>
    </source>
</evidence>
<evidence type="ECO:0000255" key="3">
    <source>
        <dbReference type="PROSITE-ProRule" id="PRU00542"/>
    </source>
</evidence>
<evidence type="ECO:0000256" key="4">
    <source>
        <dbReference type="SAM" id="MobiDB-lite"/>
    </source>
</evidence>
<evidence type="ECO:0000305" key="5"/>
<organism>
    <name type="scientific">Debaryomyces hansenii (strain ATCC 36239 / CBS 767 / BCRC 21394 / JCM 1990 / NBRC 0083 / IGC 2968)</name>
    <name type="common">Yeast</name>
    <name type="synonym">Torulaspora hansenii</name>
    <dbReference type="NCBI Taxonomy" id="284592"/>
    <lineage>
        <taxon>Eukaryota</taxon>
        <taxon>Fungi</taxon>
        <taxon>Dikarya</taxon>
        <taxon>Ascomycota</taxon>
        <taxon>Saccharomycotina</taxon>
        <taxon>Pichiomycetes</taxon>
        <taxon>Debaryomycetaceae</taxon>
        <taxon>Debaryomyces</taxon>
    </lineage>
</organism>
<sequence length="441" mass="48963">MSFEELGVSKWLSEALNSMKIHTPTTIQSACIPKILKGHDCIGGAKTGSGKTIAFAAPMLTQWSEDPSGIYGLVLTPTRELALQIAEQFAALGSSMNIKVSVIVGGEDIVKQALELQRRPHFVVATPGRLADHILNSGEDTVCGLRRVKYLILDEADRLLSNSFGGDLERCFNILPSTDKRQTLLFTATVTDAVRALKDRPVPKGKLPVFIHEVETVDKVAIPSTLSVKYVFVPSYVKEAYLHSILNLPQYSDSLSIIFTNRTATAELLRRTLRKLEFRVASLHSEMPQTERTNSLHRFKAGAAKILIATDVASRGLDIPTVELVVNYDIPADADDFIHRVGRTARAGRKGDAISIVAEKDVDRILAIEERINKKMDLIEDISDNKVIKDSLNKTSVAKREAFMDMDRENFGEKRKINKSKRQANEGTISIHESKKKKHHK</sequence>
<gene>
    <name type="primary">DBP8</name>
    <name type="ordered locus">DEHA2G23782g</name>
</gene>
<comment type="function">
    <text evidence="1">ATP-binding RNA helicase involved in 40S ribosomal subunit biogenesis and is required for the normal formation of 18S rRNAs through pre-rRNA processing at A0, A1 and A2 sites. Required for vegetative growth (By similarity).</text>
</comment>
<comment type="catalytic activity">
    <reaction>
        <text>ATP + H2O = ADP + phosphate + H(+)</text>
        <dbReference type="Rhea" id="RHEA:13065"/>
        <dbReference type="ChEBI" id="CHEBI:15377"/>
        <dbReference type="ChEBI" id="CHEBI:15378"/>
        <dbReference type="ChEBI" id="CHEBI:30616"/>
        <dbReference type="ChEBI" id="CHEBI:43474"/>
        <dbReference type="ChEBI" id="CHEBI:456216"/>
        <dbReference type="EC" id="3.6.4.13"/>
    </reaction>
</comment>
<comment type="subcellular location">
    <subcellularLocation>
        <location evidence="1">Nucleus</location>
        <location evidence="1">Nucleolus</location>
    </subcellularLocation>
</comment>
<comment type="domain">
    <text>The Q motif is unique to and characteristic of the DEAD box family of RNA helicases and controls ATP binding and hydrolysis.</text>
</comment>
<comment type="similarity">
    <text evidence="5">Belongs to the DEAD box helicase family. DDX49/DBP8 subfamily.</text>
</comment>
<dbReference type="EC" id="3.6.4.13"/>
<dbReference type="EMBL" id="CR382139">
    <property type="protein sequence ID" value="CAG91086.2"/>
    <property type="molecule type" value="Genomic_DNA"/>
</dbReference>
<dbReference type="RefSeq" id="XP_462573.2">
    <property type="nucleotide sequence ID" value="XM_462573.1"/>
</dbReference>
<dbReference type="SMR" id="Q6BGU8"/>
<dbReference type="FunCoup" id="Q6BGU8">
    <property type="interactions" value="902"/>
</dbReference>
<dbReference type="STRING" id="284592.Q6BGU8"/>
<dbReference type="GeneID" id="2905531"/>
<dbReference type="KEGG" id="dha:DEHA2G23782g"/>
<dbReference type="VEuPathDB" id="FungiDB:DEHA2G23782g"/>
<dbReference type="eggNOG" id="KOG0340">
    <property type="taxonomic scope" value="Eukaryota"/>
</dbReference>
<dbReference type="HOGENOM" id="CLU_003041_1_1_1"/>
<dbReference type="InParanoid" id="Q6BGU8"/>
<dbReference type="OMA" id="IMIFTDT"/>
<dbReference type="OrthoDB" id="10261904at2759"/>
<dbReference type="Proteomes" id="UP000000599">
    <property type="component" value="Chromosome G"/>
</dbReference>
<dbReference type="GO" id="GO:0005829">
    <property type="term" value="C:cytosol"/>
    <property type="evidence" value="ECO:0007669"/>
    <property type="project" value="TreeGrafter"/>
</dbReference>
<dbReference type="GO" id="GO:0005730">
    <property type="term" value="C:nucleolus"/>
    <property type="evidence" value="ECO:0007669"/>
    <property type="project" value="UniProtKB-SubCell"/>
</dbReference>
<dbReference type="GO" id="GO:0032040">
    <property type="term" value="C:small-subunit processome"/>
    <property type="evidence" value="ECO:0007669"/>
    <property type="project" value="EnsemblFungi"/>
</dbReference>
<dbReference type="GO" id="GO:0005524">
    <property type="term" value="F:ATP binding"/>
    <property type="evidence" value="ECO:0007669"/>
    <property type="project" value="UniProtKB-KW"/>
</dbReference>
<dbReference type="GO" id="GO:0016887">
    <property type="term" value="F:ATP hydrolysis activity"/>
    <property type="evidence" value="ECO:0007669"/>
    <property type="project" value="EnsemblFungi"/>
</dbReference>
<dbReference type="GO" id="GO:0003723">
    <property type="term" value="F:RNA binding"/>
    <property type="evidence" value="ECO:0007669"/>
    <property type="project" value="UniProtKB-KW"/>
</dbReference>
<dbReference type="GO" id="GO:0003724">
    <property type="term" value="F:RNA helicase activity"/>
    <property type="evidence" value="ECO:0007669"/>
    <property type="project" value="UniProtKB-EC"/>
</dbReference>
<dbReference type="GO" id="GO:0000480">
    <property type="term" value="P:endonucleolytic cleavage in 5'-ETS of tricistronic rRNA transcript (SSU-rRNA, 5.8S rRNA, LSU-rRNA)"/>
    <property type="evidence" value="ECO:0007669"/>
    <property type="project" value="EnsemblFungi"/>
</dbReference>
<dbReference type="GO" id="GO:0000447">
    <property type="term" value="P:endonucleolytic cleavage in ITS1 to separate SSU-rRNA from 5.8S rRNA and LSU-rRNA from tricistronic rRNA transcript (SSU-rRNA, 5.8S rRNA, LSU-rRNA)"/>
    <property type="evidence" value="ECO:0007669"/>
    <property type="project" value="EnsemblFungi"/>
</dbReference>
<dbReference type="GO" id="GO:0000472">
    <property type="term" value="P:endonucleolytic cleavage to generate mature 5'-end of SSU-rRNA from (SSU-rRNA, 5.8S rRNA, LSU-rRNA)"/>
    <property type="evidence" value="ECO:0007669"/>
    <property type="project" value="EnsemblFungi"/>
</dbReference>
<dbReference type="CDD" id="cd17955">
    <property type="entry name" value="DEADc_DDX49"/>
    <property type="match status" value="1"/>
</dbReference>
<dbReference type="CDD" id="cd18787">
    <property type="entry name" value="SF2_C_DEAD"/>
    <property type="match status" value="1"/>
</dbReference>
<dbReference type="Gene3D" id="3.40.50.300">
    <property type="entry name" value="P-loop containing nucleotide triphosphate hydrolases"/>
    <property type="match status" value="2"/>
</dbReference>
<dbReference type="InterPro" id="IPR011545">
    <property type="entry name" value="DEAD/DEAH_box_helicase_dom"/>
</dbReference>
<dbReference type="InterPro" id="IPR050079">
    <property type="entry name" value="DEAD_box_RNA_helicase"/>
</dbReference>
<dbReference type="InterPro" id="IPR014001">
    <property type="entry name" value="Helicase_ATP-bd"/>
</dbReference>
<dbReference type="InterPro" id="IPR001650">
    <property type="entry name" value="Helicase_C-like"/>
</dbReference>
<dbReference type="InterPro" id="IPR027417">
    <property type="entry name" value="P-loop_NTPase"/>
</dbReference>
<dbReference type="InterPro" id="IPR000629">
    <property type="entry name" value="RNA-helicase_DEAD-box_CS"/>
</dbReference>
<dbReference type="InterPro" id="IPR014014">
    <property type="entry name" value="RNA_helicase_DEAD_Q_motif"/>
</dbReference>
<dbReference type="PANTHER" id="PTHR47959:SF24">
    <property type="entry name" value="ATP-DEPENDENT RNA HELICASE"/>
    <property type="match status" value="1"/>
</dbReference>
<dbReference type="PANTHER" id="PTHR47959">
    <property type="entry name" value="ATP-DEPENDENT RNA HELICASE RHLE-RELATED"/>
    <property type="match status" value="1"/>
</dbReference>
<dbReference type="Pfam" id="PF00270">
    <property type="entry name" value="DEAD"/>
    <property type="match status" value="1"/>
</dbReference>
<dbReference type="Pfam" id="PF00271">
    <property type="entry name" value="Helicase_C"/>
    <property type="match status" value="1"/>
</dbReference>
<dbReference type="SMART" id="SM00487">
    <property type="entry name" value="DEXDc"/>
    <property type="match status" value="1"/>
</dbReference>
<dbReference type="SMART" id="SM00490">
    <property type="entry name" value="HELICc"/>
    <property type="match status" value="1"/>
</dbReference>
<dbReference type="SUPFAM" id="SSF52540">
    <property type="entry name" value="P-loop containing nucleoside triphosphate hydrolases"/>
    <property type="match status" value="1"/>
</dbReference>
<dbReference type="PROSITE" id="PS00039">
    <property type="entry name" value="DEAD_ATP_HELICASE"/>
    <property type="match status" value="1"/>
</dbReference>
<dbReference type="PROSITE" id="PS51192">
    <property type="entry name" value="HELICASE_ATP_BIND_1"/>
    <property type="match status" value="1"/>
</dbReference>
<dbReference type="PROSITE" id="PS51194">
    <property type="entry name" value="HELICASE_CTER"/>
    <property type="match status" value="1"/>
</dbReference>
<dbReference type="PROSITE" id="PS51195">
    <property type="entry name" value="Q_MOTIF"/>
    <property type="match status" value="1"/>
</dbReference>
<name>DBP8_DEBHA</name>
<reference key="1">
    <citation type="journal article" date="2004" name="Nature">
        <title>Genome evolution in yeasts.</title>
        <authorList>
            <person name="Dujon B."/>
            <person name="Sherman D."/>
            <person name="Fischer G."/>
            <person name="Durrens P."/>
            <person name="Casaregola S."/>
            <person name="Lafontaine I."/>
            <person name="de Montigny J."/>
            <person name="Marck C."/>
            <person name="Neuveglise C."/>
            <person name="Talla E."/>
            <person name="Goffard N."/>
            <person name="Frangeul L."/>
            <person name="Aigle M."/>
            <person name="Anthouard V."/>
            <person name="Babour A."/>
            <person name="Barbe V."/>
            <person name="Barnay S."/>
            <person name="Blanchin S."/>
            <person name="Beckerich J.-M."/>
            <person name="Beyne E."/>
            <person name="Bleykasten C."/>
            <person name="Boisrame A."/>
            <person name="Boyer J."/>
            <person name="Cattolico L."/>
            <person name="Confanioleri F."/>
            <person name="de Daruvar A."/>
            <person name="Despons L."/>
            <person name="Fabre E."/>
            <person name="Fairhead C."/>
            <person name="Ferry-Dumazet H."/>
            <person name="Groppi A."/>
            <person name="Hantraye F."/>
            <person name="Hennequin C."/>
            <person name="Jauniaux N."/>
            <person name="Joyet P."/>
            <person name="Kachouri R."/>
            <person name="Kerrest A."/>
            <person name="Koszul R."/>
            <person name="Lemaire M."/>
            <person name="Lesur I."/>
            <person name="Ma L."/>
            <person name="Muller H."/>
            <person name="Nicaud J.-M."/>
            <person name="Nikolski M."/>
            <person name="Oztas S."/>
            <person name="Ozier-Kalogeropoulos O."/>
            <person name="Pellenz S."/>
            <person name="Potier S."/>
            <person name="Richard G.-F."/>
            <person name="Straub M.-L."/>
            <person name="Suleau A."/>
            <person name="Swennen D."/>
            <person name="Tekaia F."/>
            <person name="Wesolowski-Louvel M."/>
            <person name="Westhof E."/>
            <person name="Wirth B."/>
            <person name="Zeniou-Meyer M."/>
            <person name="Zivanovic Y."/>
            <person name="Bolotin-Fukuhara M."/>
            <person name="Thierry A."/>
            <person name="Bouchier C."/>
            <person name="Caudron B."/>
            <person name="Scarpelli C."/>
            <person name="Gaillardin C."/>
            <person name="Weissenbach J."/>
            <person name="Wincker P."/>
            <person name="Souciet J.-L."/>
        </authorList>
    </citation>
    <scope>NUCLEOTIDE SEQUENCE [LARGE SCALE GENOMIC DNA]</scope>
    <source>
        <strain>ATCC 36239 / CBS 767 / BCRC 21394 / JCM 1990 / NBRC 0083 / IGC 2968</strain>
    </source>
</reference>
<feature type="chain" id="PRO_0000232286" description="ATP-dependent RNA helicase DBP8">
    <location>
        <begin position="1"/>
        <end position="441"/>
    </location>
</feature>
<feature type="domain" description="Helicase ATP-binding" evidence="2">
    <location>
        <begin position="32"/>
        <end position="208"/>
    </location>
</feature>
<feature type="domain" description="Helicase C-terminal" evidence="3">
    <location>
        <begin position="247"/>
        <end position="387"/>
    </location>
</feature>
<feature type="region of interest" description="Disordered" evidence="4">
    <location>
        <begin position="409"/>
        <end position="441"/>
    </location>
</feature>
<feature type="short sequence motif" description="Q motif">
    <location>
        <begin position="1"/>
        <end position="29"/>
    </location>
</feature>
<feature type="short sequence motif" description="DEAD box">
    <location>
        <begin position="154"/>
        <end position="157"/>
    </location>
</feature>
<feature type="binding site" evidence="2">
    <location>
        <begin position="45"/>
        <end position="52"/>
    </location>
    <ligand>
        <name>ATP</name>
        <dbReference type="ChEBI" id="CHEBI:30616"/>
    </ligand>
</feature>
<proteinExistence type="inferred from homology"/>
<protein>
    <recommendedName>
        <fullName>ATP-dependent RNA helicase DBP8</fullName>
        <ecNumber>3.6.4.13</ecNumber>
    </recommendedName>
</protein>
<keyword id="KW-0067">ATP-binding</keyword>
<keyword id="KW-0347">Helicase</keyword>
<keyword id="KW-0378">Hydrolase</keyword>
<keyword id="KW-0547">Nucleotide-binding</keyword>
<keyword id="KW-0539">Nucleus</keyword>
<keyword id="KW-1185">Reference proteome</keyword>
<keyword id="KW-0690">Ribosome biogenesis</keyword>
<keyword id="KW-0694">RNA-binding</keyword>
<keyword id="KW-0698">rRNA processing</keyword>